<feature type="chain" id="PRO_0000032076" description="Legumin type B alpha chain">
    <location>
        <begin position="1" status="less than"/>
        <end position="154"/>
    </location>
</feature>
<feature type="chain" id="PRO_0000032077" description="Legumin type B beta chain">
    <location>
        <begin position="155"/>
        <end position="335"/>
    </location>
</feature>
<feature type="domain" description="Cupin type-1" evidence="1">
    <location>
        <begin position="167"/>
        <end position="314"/>
    </location>
</feature>
<feature type="region of interest" description="Disordered" evidence="2">
    <location>
        <begin position="47"/>
        <end position="87"/>
    </location>
</feature>
<feature type="region of interest" description="Disordered" evidence="2">
    <location>
        <begin position="102"/>
        <end position="155"/>
    </location>
</feature>
<feature type="compositionally biased region" description="Basic and acidic residues" evidence="2">
    <location>
        <begin position="105"/>
        <end position="118"/>
    </location>
</feature>
<feature type="compositionally biased region" description="Acidic residues" evidence="2">
    <location>
        <begin position="135"/>
        <end position="144"/>
    </location>
</feature>
<feature type="disulfide bond" description="Interchain (between alpha and beta chains)" evidence="1">
    <location>
        <begin status="unknown"/>
        <end position="161"/>
    </location>
</feature>
<feature type="non-terminal residue">
    <location>
        <position position="1"/>
    </location>
</feature>
<accession>P16078</accession>
<comment type="function">
    <text>This protein found in the seeds of many leguminous and non-leguminous plants is the source of sulfur-containing amino acids in seed meals.</text>
</comment>
<comment type="subunit">
    <text>Hexamer; each subunit is composed of an acidic and a basic chain derived from a single precursor and linked by a disulfide bond.</text>
</comment>
<comment type="similarity">
    <text evidence="3">Belongs to the 11S seed storage protein (globulins) family.</text>
</comment>
<name>LEGB2_VICFA</name>
<protein>
    <recommendedName>
        <fullName>Legumin type B</fullName>
    </recommendedName>
    <component>
        <recommendedName>
            <fullName>Legumin type B alpha chain</fullName>
        </recommendedName>
        <alternativeName>
            <fullName>Legumin type B acidic chain</fullName>
        </alternativeName>
    </component>
    <component>
        <recommendedName>
            <fullName>Legumin type B beta chain</fullName>
        </recommendedName>
        <alternativeName>
            <fullName>Legumin type B basic chain</fullName>
        </alternativeName>
    </component>
</protein>
<sequence length="335" mass="37820">GIPYWTYNNGDEPLVAISLLDTSNIANQLDSTPRVFYLGGNPEVEFPETQEEQQERHQQKHSLPVGRRGGQHQQEEESEEQKDGNSVLSGFSSEFLAQTFNTEEDTAKRLRSPRDKRNQIVRVEGGLRIINPEGQQEEEEEEEEEKQRSEQGRNGLEETICSLKIRENIAQPARADLYNPRAGSISTANSLTLPILRYLRLSAEYVRLYRNGIYAPHWNINANSLLYVIRGEGRVRIVNSQGNAVFDNKVRKGQLVVVPQNFVVAEQAGEEEGLEYLVFKTNDRAAVSHVQQVFRATPADVLANAFGLRQRQVTELKLSGNRGPLVHPQSQSQSN</sequence>
<dbReference type="EMBL" id="X14237">
    <property type="protein sequence ID" value="CAA32454.1"/>
    <property type="molecule type" value="Genomic_DNA"/>
</dbReference>
<dbReference type="PIR" id="S07576">
    <property type="entry name" value="S07576"/>
</dbReference>
<dbReference type="SMR" id="P16078"/>
<dbReference type="GO" id="GO:0045735">
    <property type="term" value="F:nutrient reservoir activity"/>
    <property type="evidence" value="ECO:0007669"/>
    <property type="project" value="UniProtKB-KW"/>
</dbReference>
<dbReference type="CDD" id="cd02243">
    <property type="entry name" value="cupin_11S_legumin_C"/>
    <property type="match status" value="1"/>
</dbReference>
<dbReference type="FunFam" id="2.60.120.10:FF:000073">
    <property type="entry name" value="Glycinin G1"/>
    <property type="match status" value="1"/>
</dbReference>
<dbReference type="Gene3D" id="2.60.120.10">
    <property type="entry name" value="Jelly Rolls"/>
    <property type="match status" value="2"/>
</dbReference>
<dbReference type="InterPro" id="IPR022379">
    <property type="entry name" value="11S_seedstore_CS"/>
</dbReference>
<dbReference type="InterPro" id="IPR006044">
    <property type="entry name" value="11S_seedstore_pln"/>
</dbReference>
<dbReference type="InterPro" id="IPR006045">
    <property type="entry name" value="Cupin_1"/>
</dbReference>
<dbReference type="InterPro" id="IPR014710">
    <property type="entry name" value="RmlC-like_jellyroll"/>
</dbReference>
<dbReference type="InterPro" id="IPR011051">
    <property type="entry name" value="RmlC_Cupin_sf"/>
</dbReference>
<dbReference type="InterPro" id="IPR050253">
    <property type="entry name" value="Seed_Storage-Functional"/>
</dbReference>
<dbReference type="PANTHER" id="PTHR31189:SF63">
    <property type="entry name" value="GLYCININ G5"/>
    <property type="match status" value="1"/>
</dbReference>
<dbReference type="PANTHER" id="PTHR31189">
    <property type="entry name" value="OS03G0336100 PROTEIN-RELATED"/>
    <property type="match status" value="1"/>
</dbReference>
<dbReference type="Pfam" id="PF00190">
    <property type="entry name" value="Cupin_1"/>
    <property type="match status" value="1"/>
</dbReference>
<dbReference type="PRINTS" id="PR00439">
    <property type="entry name" value="11SGLOBULIN"/>
</dbReference>
<dbReference type="SMART" id="SM00835">
    <property type="entry name" value="Cupin_1"/>
    <property type="match status" value="1"/>
</dbReference>
<dbReference type="SUPFAM" id="SSF51182">
    <property type="entry name" value="RmlC-like cupins"/>
    <property type="match status" value="1"/>
</dbReference>
<dbReference type="PROSITE" id="PS00305">
    <property type="entry name" value="11S_SEED_STORAGE"/>
    <property type="match status" value="1"/>
</dbReference>
<reference key="1">
    <citation type="journal article" date="1989" name="Plant Mol. Biol.">
        <title>The legumin gene family: structure and evolutionary implications of Vicia faba B-type genes and pseudogenes.</title>
        <authorList>
            <person name="Heim U."/>
            <person name="Schubert R."/>
            <person name="Baeumlein H."/>
            <person name="Wobus U."/>
        </authorList>
    </citation>
    <scope>NUCLEOTIDE SEQUENCE [GENOMIC DNA]</scope>
    <source>
        <strain>cv. Fribo</strain>
        <tissue>Leaf</tissue>
    </source>
</reference>
<gene>
    <name type="primary">LEB2</name>
</gene>
<organism>
    <name type="scientific">Vicia faba</name>
    <name type="common">Broad bean</name>
    <name type="synonym">Faba vulgaris</name>
    <dbReference type="NCBI Taxonomy" id="3906"/>
    <lineage>
        <taxon>Eukaryota</taxon>
        <taxon>Viridiplantae</taxon>
        <taxon>Streptophyta</taxon>
        <taxon>Embryophyta</taxon>
        <taxon>Tracheophyta</taxon>
        <taxon>Spermatophyta</taxon>
        <taxon>Magnoliopsida</taxon>
        <taxon>eudicotyledons</taxon>
        <taxon>Gunneridae</taxon>
        <taxon>Pentapetalae</taxon>
        <taxon>rosids</taxon>
        <taxon>fabids</taxon>
        <taxon>Fabales</taxon>
        <taxon>Fabaceae</taxon>
        <taxon>Papilionoideae</taxon>
        <taxon>50 kb inversion clade</taxon>
        <taxon>NPAAA clade</taxon>
        <taxon>Hologalegina</taxon>
        <taxon>IRL clade</taxon>
        <taxon>Fabeae</taxon>
        <taxon>Vicia</taxon>
    </lineage>
</organism>
<evidence type="ECO:0000255" key="1"/>
<evidence type="ECO:0000256" key="2">
    <source>
        <dbReference type="SAM" id="MobiDB-lite"/>
    </source>
</evidence>
<evidence type="ECO:0000305" key="3"/>
<keyword id="KW-1015">Disulfide bond</keyword>
<keyword id="KW-0708">Seed storage protein</keyword>
<keyword id="KW-0758">Storage protein</keyword>
<proteinExistence type="inferred from homology"/>